<evidence type="ECO:0000255" key="1">
    <source>
        <dbReference type="HAMAP-Rule" id="MF_01322"/>
    </source>
</evidence>
<feature type="chain" id="PRO_0000308860" description="DNA-directed RNA polymerase subunit beta'">
    <location>
        <begin position="1"/>
        <end position="1316"/>
    </location>
</feature>
<feature type="binding site" evidence="1">
    <location>
        <position position="60"/>
    </location>
    <ligand>
        <name>Zn(2+)</name>
        <dbReference type="ChEBI" id="CHEBI:29105"/>
        <label>1</label>
    </ligand>
</feature>
<feature type="binding site" evidence="1">
    <location>
        <position position="62"/>
    </location>
    <ligand>
        <name>Zn(2+)</name>
        <dbReference type="ChEBI" id="CHEBI:29105"/>
        <label>1</label>
    </ligand>
</feature>
<feature type="binding site" evidence="1">
    <location>
        <position position="75"/>
    </location>
    <ligand>
        <name>Zn(2+)</name>
        <dbReference type="ChEBI" id="CHEBI:29105"/>
        <label>1</label>
    </ligand>
</feature>
<feature type="binding site" evidence="1">
    <location>
        <position position="78"/>
    </location>
    <ligand>
        <name>Zn(2+)</name>
        <dbReference type="ChEBI" id="CHEBI:29105"/>
        <label>1</label>
    </ligand>
</feature>
<feature type="binding site" evidence="1">
    <location>
        <position position="535"/>
    </location>
    <ligand>
        <name>Mg(2+)</name>
        <dbReference type="ChEBI" id="CHEBI:18420"/>
    </ligand>
</feature>
<feature type="binding site" evidence="1">
    <location>
        <position position="537"/>
    </location>
    <ligand>
        <name>Mg(2+)</name>
        <dbReference type="ChEBI" id="CHEBI:18420"/>
    </ligand>
</feature>
<feature type="binding site" evidence="1">
    <location>
        <position position="539"/>
    </location>
    <ligand>
        <name>Mg(2+)</name>
        <dbReference type="ChEBI" id="CHEBI:18420"/>
    </ligand>
</feature>
<feature type="binding site" evidence="1">
    <location>
        <position position="891"/>
    </location>
    <ligand>
        <name>Zn(2+)</name>
        <dbReference type="ChEBI" id="CHEBI:29105"/>
        <label>2</label>
    </ligand>
</feature>
<feature type="binding site" evidence="1">
    <location>
        <position position="968"/>
    </location>
    <ligand>
        <name>Zn(2+)</name>
        <dbReference type="ChEBI" id="CHEBI:29105"/>
        <label>2</label>
    </ligand>
</feature>
<feature type="binding site" evidence="1">
    <location>
        <position position="975"/>
    </location>
    <ligand>
        <name>Zn(2+)</name>
        <dbReference type="ChEBI" id="CHEBI:29105"/>
        <label>2</label>
    </ligand>
</feature>
<feature type="binding site" evidence="1">
    <location>
        <position position="978"/>
    </location>
    <ligand>
        <name>Zn(2+)</name>
        <dbReference type="ChEBI" id="CHEBI:29105"/>
        <label>2</label>
    </ligand>
</feature>
<name>RPOC_MYCUA</name>
<dbReference type="EC" id="2.7.7.6" evidence="1"/>
<dbReference type="EMBL" id="CP000325">
    <property type="protein sequence ID" value="ABL03394.1"/>
    <property type="molecule type" value="Genomic_DNA"/>
</dbReference>
<dbReference type="RefSeq" id="WP_011739019.1">
    <property type="nucleotide sequence ID" value="NC_008611.1"/>
</dbReference>
<dbReference type="SMR" id="A0PM25"/>
<dbReference type="KEGG" id="mul:MUL_0747"/>
<dbReference type="eggNOG" id="COG0086">
    <property type="taxonomic scope" value="Bacteria"/>
</dbReference>
<dbReference type="HOGENOM" id="CLU_000524_3_1_11"/>
<dbReference type="Proteomes" id="UP000000765">
    <property type="component" value="Chromosome"/>
</dbReference>
<dbReference type="GO" id="GO:0000428">
    <property type="term" value="C:DNA-directed RNA polymerase complex"/>
    <property type="evidence" value="ECO:0007669"/>
    <property type="project" value="UniProtKB-KW"/>
</dbReference>
<dbReference type="GO" id="GO:0003677">
    <property type="term" value="F:DNA binding"/>
    <property type="evidence" value="ECO:0007669"/>
    <property type="project" value="UniProtKB-UniRule"/>
</dbReference>
<dbReference type="GO" id="GO:0003899">
    <property type="term" value="F:DNA-directed RNA polymerase activity"/>
    <property type="evidence" value="ECO:0007669"/>
    <property type="project" value="UniProtKB-UniRule"/>
</dbReference>
<dbReference type="GO" id="GO:0000287">
    <property type="term" value="F:magnesium ion binding"/>
    <property type="evidence" value="ECO:0007669"/>
    <property type="project" value="UniProtKB-UniRule"/>
</dbReference>
<dbReference type="GO" id="GO:0008270">
    <property type="term" value="F:zinc ion binding"/>
    <property type="evidence" value="ECO:0007669"/>
    <property type="project" value="UniProtKB-UniRule"/>
</dbReference>
<dbReference type="GO" id="GO:0006351">
    <property type="term" value="P:DNA-templated transcription"/>
    <property type="evidence" value="ECO:0007669"/>
    <property type="project" value="UniProtKB-UniRule"/>
</dbReference>
<dbReference type="CDD" id="cd02655">
    <property type="entry name" value="RNAP_beta'_C"/>
    <property type="match status" value="1"/>
</dbReference>
<dbReference type="CDD" id="cd01609">
    <property type="entry name" value="RNAP_beta'_N"/>
    <property type="match status" value="1"/>
</dbReference>
<dbReference type="FunFam" id="1.10.132.30:FF:000003">
    <property type="entry name" value="DNA-directed RNA polymerase subunit beta"/>
    <property type="match status" value="1"/>
</dbReference>
<dbReference type="FunFam" id="1.10.150.390:FF:000002">
    <property type="entry name" value="DNA-directed RNA polymerase subunit beta"/>
    <property type="match status" value="1"/>
</dbReference>
<dbReference type="FunFam" id="1.10.40.90:FF:000001">
    <property type="entry name" value="DNA-directed RNA polymerase subunit beta"/>
    <property type="match status" value="1"/>
</dbReference>
<dbReference type="FunFam" id="4.10.860.120:FF:000001">
    <property type="entry name" value="DNA-directed RNA polymerase subunit beta"/>
    <property type="match status" value="1"/>
</dbReference>
<dbReference type="Gene3D" id="1.10.132.30">
    <property type="match status" value="1"/>
</dbReference>
<dbReference type="Gene3D" id="1.10.150.390">
    <property type="match status" value="1"/>
</dbReference>
<dbReference type="Gene3D" id="1.10.1790.20">
    <property type="match status" value="1"/>
</dbReference>
<dbReference type="Gene3D" id="1.10.40.90">
    <property type="match status" value="1"/>
</dbReference>
<dbReference type="Gene3D" id="2.40.40.20">
    <property type="match status" value="1"/>
</dbReference>
<dbReference type="Gene3D" id="2.40.50.100">
    <property type="match status" value="1"/>
</dbReference>
<dbReference type="Gene3D" id="4.10.860.120">
    <property type="entry name" value="RNA polymerase II, clamp domain"/>
    <property type="match status" value="1"/>
</dbReference>
<dbReference type="Gene3D" id="1.10.274.100">
    <property type="entry name" value="RNA polymerase Rpb1, domain 3"/>
    <property type="match status" value="1"/>
</dbReference>
<dbReference type="HAMAP" id="MF_01322">
    <property type="entry name" value="RNApol_bact_RpoC"/>
    <property type="match status" value="1"/>
</dbReference>
<dbReference type="InterPro" id="IPR045867">
    <property type="entry name" value="DNA-dir_RpoC_beta_prime"/>
</dbReference>
<dbReference type="InterPro" id="IPR012754">
    <property type="entry name" value="DNA-dir_RpoC_beta_prime_bact"/>
</dbReference>
<dbReference type="InterPro" id="IPR000722">
    <property type="entry name" value="RNA_pol_asu"/>
</dbReference>
<dbReference type="InterPro" id="IPR006592">
    <property type="entry name" value="RNA_pol_N"/>
</dbReference>
<dbReference type="InterPro" id="IPR007080">
    <property type="entry name" value="RNA_pol_Rpb1_1"/>
</dbReference>
<dbReference type="InterPro" id="IPR007066">
    <property type="entry name" value="RNA_pol_Rpb1_3"/>
</dbReference>
<dbReference type="InterPro" id="IPR042102">
    <property type="entry name" value="RNA_pol_Rpb1_3_sf"/>
</dbReference>
<dbReference type="InterPro" id="IPR007083">
    <property type="entry name" value="RNA_pol_Rpb1_4"/>
</dbReference>
<dbReference type="InterPro" id="IPR007081">
    <property type="entry name" value="RNA_pol_Rpb1_5"/>
</dbReference>
<dbReference type="InterPro" id="IPR044893">
    <property type="entry name" value="RNA_pol_Rpb1_clamp_domain"/>
</dbReference>
<dbReference type="InterPro" id="IPR038120">
    <property type="entry name" value="Rpb1_funnel_sf"/>
</dbReference>
<dbReference type="NCBIfam" id="NF011498">
    <property type="entry name" value="PRK14906.1"/>
    <property type="match status" value="1"/>
</dbReference>
<dbReference type="NCBIfam" id="TIGR02386">
    <property type="entry name" value="rpoC_TIGR"/>
    <property type="match status" value="1"/>
</dbReference>
<dbReference type="PANTHER" id="PTHR19376">
    <property type="entry name" value="DNA-DIRECTED RNA POLYMERASE"/>
    <property type="match status" value="1"/>
</dbReference>
<dbReference type="PANTHER" id="PTHR19376:SF54">
    <property type="entry name" value="DNA-DIRECTED RNA POLYMERASE SUBUNIT BETA"/>
    <property type="match status" value="1"/>
</dbReference>
<dbReference type="Pfam" id="PF04997">
    <property type="entry name" value="RNA_pol_Rpb1_1"/>
    <property type="match status" value="1"/>
</dbReference>
<dbReference type="Pfam" id="PF00623">
    <property type="entry name" value="RNA_pol_Rpb1_2"/>
    <property type="match status" value="1"/>
</dbReference>
<dbReference type="Pfam" id="PF04983">
    <property type="entry name" value="RNA_pol_Rpb1_3"/>
    <property type="match status" value="1"/>
</dbReference>
<dbReference type="Pfam" id="PF05000">
    <property type="entry name" value="RNA_pol_Rpb1_4"/>
    <property type="match status" value="1"/>
</dbReference>
<dbReference type="Pfam" id="PF04998">
    <property type="entry name" value="RNA_pol_Rpb1_5"/>
    <property type="match status" value="1"/>
</dbReference>
<dbReference type="SMART" id="SM00663">
    <property type="entry name" value="RPOLA_N"/>
    <property type="match status" value="1"/>
</dbReference>
<dbReference type="SUPFAM" id="SSF64484">
    <property type="entry name" value="beta and beta-prime subunits of DNA dependent RNA-polymerase"/>
    <property type="match status" value="1"/>
</dbReference>
<keyword id="KW-0240">DNA-directed RNA polymerase</keyword>
<keyword id="KW-0460">Magnesium</keyword>
<keyword id="KW-0479">Metal-binding</keyword>
<keyword id="KW-0548">Nucleotidyltransferase</keyword>
<keyword id="KW-0804">Transcription</keyword>
<keyword id="KW-0808">Transferase</keyword>
<keyword id="KW-0862">Zinc</keyword>
<reference key="1">
    <citation type="journal article" date="2007" name="Genome Res.">
        <title>Reductive evolution and niche adaptation inferred from the genome of Mycobacterium ulcerans, the causative agent of Buruli ulcer.</title>
        <authorList>
            <person name="Stinear T.P."/>
            <person name="Seemann T."/>
            <person name="Pidot S."/>
            <person name="Frigui W."/>
            <person name="Reysset G."/>
            <person name="Garnier T."/>
            <person name="Meurice G."/>
            <person name="Simon D."/>
            <person name="Bouchier C."/>
            <person name="Ma L."/>
            <person name="Tichit M."/>
            <person name="Porter J.L."/>
            <person name="Ryan J."/>
            <person name="Johnson P.D.R."/>
            <person name="Davies J.K."/>
            <person name="Jenkin G.A."/>
            <person name="Small P.L.C."/>
            <person name="Jones L.M."/>
            <person name="Tekaia F."/>
            <person name="Laval F."/>
            <person name="Daffe M."/>
            <person name="Parkhill J."/>
            <person name="Cole S.T."/>
        </authorList>
    </citation>
    <scope>NUCLEOTIDE SEQUENCE [LARGE SCALE GENOMIC DNA]</scope>
    <source>
        <strain>Agy99</strain>
    </source>
</reference>
<comment type="function">
    <text evidence="1">DNA-dependent RNA polymerase catalyzes the transcription of DNA into RNA using the four ribonucleoside triphosphates as substrates.</text>
</comment>
<comment type="catalytic activity">
    <reaction evidence="1">
        <text>RNA(n) + a ribonucleoside 5'-triphosphate = RNA(n+1) + diphosphate</text>
        <dbReference type="Rhea" id="RHEA:21248"/>
        <dbReference type="Rhea" id="RHEA-COMP:14527"/>
        <dbReference type="Rhea" id="RHEA-COMP:17342"/>
        <dbReference type="ChEBI" id="CHEBI:33019"/>
        <dbReference type="ChEBI" id="CHEBI:61557"/>
        <dbReference type="ChEBI" id="CHEBI:140395"/>
        <dbReference type="EC" id="2.7.7.6"/>
    </reaction>
</comment>
<comment type="cofactor">
    <cofactor evidence="1">
        <name>Mg(2+)</name>
        <dbReference type="ChEBI" id="CHEBI:18420"/>
    </cofactor>
    <text evidence="1">Binds 1 Mg(2+) ion per subunit.</text>
</comment>
<comment type="cofactor">
    <cofactor evidence="1">
        <name>Zn(2+)</name>
        <dbReference type="ChEBI" id="CHEBI:29105"/>
    </cofactor>
    <text evidence="1">Binds 2 Zn(2+) ions per subunit.</text>
</comment>
<comment type="subunit">
    <text evidence="1">The RNAP catalytic core consists of 2 alpha, 1 beta, 1 beta' and 1 omega subunit. When a sigma factor is associated with the core the holoenzyme is formed, which can initiate transcription.</text>
</comment>
<comment type="similarity">
    <text evidence="1">Belongs to the RNA polymerase beta' chain family.</text>
</comment>
<proteinExistence type="inferred from homology"/>
<protein>
    <recommendedName>
        <fullName evidence="1">DNA-directed RNA polymerase subunit beta'</fullName>
        <shortName evidence="1">RNAP subunit beta'</shortName>
        <ecNumber evidence="1">2.7.7.6</ecNumber>
    </recommendedName>
    <alternativeName>
        <fullName evidence="1">RNA polymerase subunit beta'</fullName>
    </alternativeName>
    <alternativeName>
        <fullName evidence="1">Transcriptase subunit beta'</fullName>
    </alternativeName>
</protein>
<gene>
    <name evidence="1" type="primary">rpoC</name>
    <name type="ordered locus">MUL_0747</name>
</gene>
<accession>A0PM25</accession>
<organism>
    <name type="scientific">Mycobacterium ulcerans (strain Agy99)</name>
    <dbReference type="NCBI Taxonomy" id="362242"/>
    <lineage>
        <taxon>Bacteria</taxon>
        <taxon>Bacillati</taxon>
        <taxon>Actinomycetota</taxon>
        <taxon>Actinomycetes</taxon>
        <taxon>Mycobacteriales</taxon>
        <taxon>Mycobacteriaceae</taxon>
        <taxon>Mycobacterium</taxon>
        <taxon>Mycobacterium ulcerans group</taxon>
    </lineage>
</organism>
<sequence length="1316" mass="146815">MLDVNFFDELRIGLATAEDIRQWSYGEVKKPETINYRTLKPEKDGLFCEKIFGPTRDWECYCGKYKRVRFKGIICERCGVEVTRAKVRRERMGHIELAAPVTHIWYFKGVPSRLGYLLDLAPKDLEKIIYFAAYVITSVDNEMRHNELSTLEAEMMVERKAVEDQRDADLEARAQKLEADLAELEAEGAKADARRKVRDSGEREMRQLRDRAQRELDRLEDIWSTFTKLAPKQLIVDENLYRELQDRYGEYFTGAMGAESIQKLIETFDIDAEAEILRDVIRNGKGQKKLRALKRLKVVAAFQQSGNSPMGMVLDAVPVIPPELRPLVQLDGGRFATSDLNDLYRRVINRNNRLKRLIDLGAPEIIVNNEKRMLQESVDALFDNGRRGRPVTGPGNRPLKSLSDLLKGKQGRFRQNLLGKRVDYSGRSVIVVGPQLKLHQCGLPKLMALELFKPFVMKRLVDLNHAQNIKSAKRMVERQRPQVWDVLEEVIAEHPVLLNRAPTLHRLGIQAFEPMLVEGKAIQLHPLVCEAFNADFDGDQMAVHLPLSAEAQAEARILMLSSNNILSPASGRPLAMPRLDMVTGLYYLTTEVEGDKGAYQPAVQDSPETGVYSSPAEAIMAADRGVLSVRAKIKVRLTQLRPPAEIEDELFGHNGWQPGDAWTAETTLGRVLFNELLPLGYAFVNKQMHKKVQAAIINDLAERYPMIVVAQTVDKLKDSGFYWATRSGVTVSMADVLVPPRKKEILDSYEERAEKVEKQFQRGALNHDERNEALVEIWKEATDEVGQALREHYPADNPIITIVDSGATGNFTQTRTLAGMKGLVTNPKGEFIPRPIKSSFREGLTVLEYFINTHGARKGLADTALRTADSGYLTRRLVDVSQDVIVREHDCQTERGIMVELAERQGDGTLIRDPYIETSAYARTLGADAVDEAGNVVVARGEDLGDPEIEACLAAGITQVKVRSVLTCTTGTGVCATCYGRSMATGKLVDIGEAVGIVAAQSIGEPGTQLTMRTFHQGGVGEDITGGLPRVQELFEARVPRGKAPIADVTGRVRLEDGERFYTIAIVPDDGGEEVVYDKLSKRQRLRVFKHEDGSERVLSDGDHVEVGQQLMEGSADPHEVLRVQGPREVQIHLVREVQEVYRAQGVSIHDKHIEVIVRQMLRRVTIIDSGATEFLPGSLIDRAEFEAENRRVVAESGEPAAGRPVLMGITKASLATDSWLSAASFQETTRVLTDAAINCRSDKLNGLKENVIIGKLIPAGTGINRYRNIAVQPTEEARVAAYTIPSYEDQYYSPDFGQATGAAVPLDDYGYSDYR</sequence>